<evidence type="ECO:0000255" key="1">
    <source>
        <dbReference type="HAMAP-Rule" id="MF_01039"/>
    </source>
</evidence>
<feature type="chain" id="PRO_1000135962" description="2,3-bisphosphoglycerate-dependent phosphoglycerate mutase">
    <location>
        <begin position="1"/>
        <end position="249"/>
    </location>
</feature>
<feature type="active site" description="Tele-phosphohistidine intermediate" evidence="1">
    <location>
        <position position="9"/>
    </location>
</feature>
<feature type="active site" description="Proton donor/acceptor" evidence="1">
    <location>
        <position position="87"/>
    </location>
</feature>
<feature type="binding site" evidence="1">
    <location>
        <begin position="8"/>
        <end position="15"/>
    </location>
    <ligand>
        <name>substrate</name>
    </ligand>
</feature>
<feature type="binding site" evidence="1">
    <location>
        <begin position="21"/>
        <end position="22"/>
    </location>
    <ligand>
        <name>substrate</name>
    </ligand>
</feature>
<feature type="binding site" evidence="1">
    <location>
        <position position="60"/>
    </location>
    <ligand>
        <name>substrate</name>
    </ligand>
</feature>
<feature type="binding site" evidence="1">
    <location>
        <begin position="87"/>
        <end position="90"/>
    </location>
    <ligand>
        <name>substrate</name>
    </ligand>
</feature>
<feature type="binding site" evidence="1">
    <location>
        <position position="98"/>
    </location>
    <ligand>
        <name>substrate</name>
    </ligand>
</feature>
<feature type="binding site" evidence="1">
    <location>
        <begin position="114"/>
        <end position="115"/>
    </location>
    <ligand>
        <name>substrate</name>
    </ligand>
</feature>
<feature type="binding site" evidence="1">
    <location>
        <begin position="183"/>
        <end position="184"/>
    </location>
    <ligand>
        <name>substrate</name>
    </ligand>
</feature>
<feature type="site" description="Transition state stabilizer" evidence="1">
    <location>
        <position position="182"/>
    </location>
</feature>
<organism>
    <name type="scientific">Pelodictyon phaeoclathratiforme (strain DSM 5477 / BU-1)</name>
    <dbReference type="NCBI Taxonomy" id="324925"/>
    <lineage>
        <taxon>Bacteria</taxon>
        <taxon>Pseudomonadati</taxon>
        <taxon>Chlorobiota</taxon>
        <taxon>Chlorobiia</taxon>
        <taxon>Chlorobiales</taxon>
        <taxon>Chlorobiaceae</taxon>
        <taxon>Chlorobium/Pelodictyon group</taxon>
        <taxon>Pelodictyon</taxon>
    </lineage>
</organism>
<reference key="1">
    <citation type="submission" date="2008-06" db="EMBL/GenBank/DDBJ databases">
        <title>Complete sequence of Pelodictyon phaeoclathratiforme BU-1.</title>
        <authorList>
            <consortium name="US DOE Joint Genome Institute"/>
            <person name="Lucas S."/>
            <person name="Copeland A."/>
            <person name="Lapidus A."/>
            <person name="Glavina del Rio T."/>
            <person name="Dalin E."/>
            <person name="Tice H."/>
            <person name="Bruce D."/>
            <person name="Goodwin L."/>
            <person name="Pitluck S."/>
            <person name="Schmutz J."/>
            <person name="Larimer F."/>
            <person name="Land M."/>
            <person name="Hauser L."/>
            <person name="Kyrpides N."/>
            <person name="Mikhailova N."/>
            <person name="Liu Z."/>
            <person name="Li T."/>
            <person name="Zhao F."/>
            <person name="Overmann J."/>
            <person name="Bryant D.A."/>
            <person name="Richardson P."/>
        </authorList>
    </citation>
    <scope>NUCLEOTIDE SEQUENCE [LARGE SCALE GENOMIC DNA]</scope>
    <source>
        <strain>DSM 5477 / BU-1</strain>
    </source>
</reference>
<gene>
    <name evidence="1" type="primary">gpmA</name>
    <name type="ordered locus">Ppha_0780</name>
</gene>
<name>GPMA_PELPB</name>
<accession>B4SEI0</accession>
<sequence length="249" mass="28425">MIKLVLLRHGESQWNRENRFTGWYDIDLTDQGREEAANAGKLLREGGFVFDVAYTSVLKRAIRTLWSVLDAMDLMWIPVFKSWRLNERHYGALQGLNKSETSQKYGEEQVLVWRRSYDTPPPALEKSDERYPGSEPRYADLAEEEIPLSECLKDTVDRFLPIWHETIAPEIRKGRKVIIAAHGNSLRALVKYLDNISEEDIVGVNIPTGIPLVYELDDDLNALRSYYLGDQEALKKAVDAVASQGKASQ</sequence>
<dbReference type="EC" id="5.4.2.11" evidence="1"/>
<dbReference type="EMBL" id="CP001110">
    <property type="protein sequence ID" value="ACF43072.1"/>
    <property type="molecule type" value="Genomic_DNA"/>
</dbReference>
<dbReference type="RefSeq" id="WP_012507567.1">
    <property type="nucleotide sequence ID" value="NC_011060.1"/>
</dbReference>
<dbReference type="SMR" id="B4SEI0"/>
<dbReference type="STRING" id="324925.Ppha_0780"/>
<dbReference type="KEGG" id="pph:Ppha_0780"/>
<dbReference type="eggNOG" id="COG0588">
    <property type="taxonomic scope" value="Bacteria"/>
</dbReference>
<dbReference type="HOGENOM" id="CLU_033323_1_1_10"/>
<dbReference type="OrthoDB" id="9782128at2"/>
<dbReference type="UniPathway" id="UPA00109">
    <property type="reaction ID" value="UER00186"/>
</dbReference>
<dbReference type="Proteomes" id="UP000002724">
    <property type="component" value="Chromosome"/>
</dbReference>
<dbReference type="GO" id="GO:0004619">
    <property type="term" value="F:phosphoglycerate mutase activity"/>
    <property type="evidence" value="ECO:0007669"/>
    <property type="project" value="UniProtKB-EC"/>
</dbReference>
<dbReference type="GO" id="GO:0006094">
    <property type="term" value="P:gluconeogenesis"/>
    <property type="evidence" value="ECO:0007669"/>
    <property type="project" value="UniProtKB-UniRule"/>
</dbReference>
<dbReference type="GO" id="GO:0006096">
    <property type="term" value="P:glycolytic process"/>
    <property type="evidence" value="ECO:0007669"/>
    <property type="project" value="UniProtKB-UniRule"/>
</dbReference>
<dbReference type="CDD" id="cd07067">
    <property type="entry name" value="HP_PGM_like"/>
    <property type="match status" value="1"/>
</dbReference>
<dbReference type="FunFam" id="3.40.50.1240:FF:000003">
    <property type="entry name" value="2,3-bisphosphoglycerate-dependent phosphoglycerate mutase"/>
    <property type="match status" value="1"/>
</dbReference>
<dbReference type="Gene3D" id="3.40.50.1240">
    <property type="entry name" value="Phosphoglycerate mutase-like"/>
    <property type="match status" value="1"/>
</dbReference>
<dbReference type="HAMAP" id="MF_01039">
    <property type="entry name" value="PGAM_GpmA"/>
    <property type="match status" value="1"/>
</dbReference>
<dbReference type="InterPro" id="IPR013078">
    <property type="entry name" value="His_Pase_superF_clade-1"/>
</dbReference>
<dbReference type="InterPro" id="IPR029033">
    <property type="entry name" value="His_PPase_superfam"/>
</dbReference>
<dbReference type="InterPro" id="IPR001345">
    <property type="entry name" value="PG/BPGM_mutase_AS"/>
</dbReference>
<dbReference type="InterPro" id="IPR005952">
    <property type="entry name" value="Phosphogly_mut1"/>
</dbReference>
<dbReference type="NCBIfam" id="TIGR01258">
    <property type="entry name" value="pgm_1"/>
    <property type="match status" value="1"/>
</dbReference>
<dbReference type="NCBIfam" id="NF010713">
    <property type="entry name" value="PRK14115.1"/>
    <property type="match status" value="1"/>
</dbReference>
<dbReference type="PANTHER" id="PTHR11931">
    <property type="entry name" value="PHOSPHOGLYCERATE MUTASE"/>
    <property type="match status" value="1"/>
</dbReference>
<dbReference type="Pfam" id="PF00300">
    <property type="entry name" value="His_Phos_1"/>
    <property type="match status" value="1"/>
</dbReference>
<dbReference type="PIRSF" id="PIRSF000709">
    <property type="entry name" value="6PFK_2-Ptase"/>
    <property type="match status" value="1"/>
</dbReference>
<dbReference type="SMART" id="SM00855">
    <property type="entry name" value="PGAM"/>
    <property type="match status" value="1"/>
</dbReference>
<dbReference type="SUPFAM" id="SSF53254">
    <property type="entry name" value="Phosphoglycerate mutase-like"/>
    <property type="match status" value="1"/>
</dbReference>
<dbReference type="PROSITE" id="PS00175">
    <property type="entry name" value="PG_MUTASE"/>
    <property type="match status" value="1"/>
</dbReference>
<keyword id="KW-0312">Gluconeogenesis</keyword>
<keyword id="KW-0324">Glycolysis</keyword>
<keyword id="KW-0413">Isomerase</keyword>
<keyword id="KW-1185">Reference proteome</keyword>
<comment type="function">
    <text evidence="1">Catalyzes the interconversion of 2-phosphoglycerate and 3-phosphoglycerate.</text>
</comment>
<comment type="catalytic activity">
    <reaction evidence="1">
        <text>(2R)-2-phosphoglycerate = (2R)-3-phosphoglycerate</text>
        <dbReference type="Rhea" id="RHEA:15901"/>
        <dbReference type="ChEBI" id="CHEBI:58272"/>
        <dbReference type="ChEBI" id="CHEBI:58289"/>
        <dbReference type="EC" id="5.4.2.11"/>
    </reaction>
</comment>
<comment type="pathway">
    <text evidence="1">Carbohydrate degradation; glycolysis; pyruvate from D-glyceraldehyde 3-phosphate: step 3/5.</text>
</comment>
<comment type="similarity">
    <text evidence="1">Belongs to the phosphoglycerate mutase family. BPG-dependent PGAM subfamily.</text>
</comment>
<protein>
    <recommendedName>
        <fullName evidence="1">2,3-bisphosphoglycerate-dependent phosphoglycerate mutase</fullName>
        <shortName evidence="1">BPG-dependent PGAM</shortName>
        <shortName evidence="1">PGAM</shortName>
        <shortName evidence="1">Phosphoglyceromutase</shortName>
        <shortName evidence="1">dPGM</shortName>
        <ecNumber evidence="1">5.4.2.11</ecNumber>
    </recommendedName>
</protein>
<proteinExistence type="inferred from homology"/>